<gene>
    <name evidence="1" type="primary">recX</name>
    <name type="ordered locus">ECED1_3147</name>
</gene>
<proteinExistence type="inferred from homology"/>
<organism>
    <name type="scientific">Escherichia coli O81 (strain ED1a)</name>
    <dbReference type="NCBI Taxonomy" id="585397"/>
    <lineage>
        <taxon>Bacteria</taxon>
        <taxon>Pseudomonadati</taxon>
        <taxon>Pseudomonadota</taxon>
        <taxon>Gammaproteobacteria</taxon>
        <taxon>Enterobacterales</taxon>
        <taxon>Enterobacteriaceae</taxon>
        <taxon>Escherichia</taxon>
    </lineage>
</organism>
<accession>B7MYZ5</accession>
<sequence>MTESTSRRPAYARLLDRAVRILAVRDHSEQELRRKLAAPIMGKNGPEEIDATAEDYERVIAWCHEHGYLDDSRFVARFIASRSRKGYGPARIRQELNQKGISREATEKAMRECDIDWCALARDQATRKYGEPLPTVFSEKVKIQRFLLYRGYLMEDIQDIWRNFAD</sequence>
<feature type="chain" id="PRO_1000164017" description="Regulatory protein RecX">
    <location>
        <begin position="1"/>
        <end position="166"/>
    </location>
</feature>
<comment type="function">
    <text evidence="1">Modulates RecA activity.</text>
</comment>
<comment type="subcellular location">
    <subcellularLocation>
        <location evidence="1">Cytoplasm</location>
    </subcellularLocation>
</comment>
<comment type="similarity">
    <text evidence="1">Belongs to the RecX family.</text>
</comment>
<keyword id="KW-0963">Cytoplasm</keyword>
<evidence type="ECO:0000255" key="1">
    <source>
        <dbReference type="HAMAP-Rule" id="MF_01114"/>
    </source>
</evidence>
<dbReference type="EMBL" id="CU928162">
    <property type="protein sequence ID" value="CAR09312.2"/>
    <property type="molecule type" value="Genomic_DNA"/>
</dbReference>
<dbReference type="RefSeq" id="WP_000140506.1">
    <property type="nucleotide sequence ID" value="NC_011745.1"/>
</dbReference>
<dbReference type="SMR" id="B7MYZ5"/>
<dbReference type="GeneID" id="75172780"/>
<dbReference type="KEGG" id="ecq:ECED1_3147"/>
<dbReference type="HOGENOM" id="CLU_066607_3_2_6"/>
<dbReference type="Proteomes" id="UP000000748">
    <property type="component" value="Chromosome"/>
</dbReference>
<dbReference type="GO" id="GO:0005737">
    <property type="term" value="C:cytoplasm"/>
    <property type="evidence" value="ECO:0007669"/>
    <property type="project" value="UniProtKB-SubCell"/>
</dbReference>
<dbReference type="GO" id="GO:0006282">
    <property type="term" value="P:regulation of DNA repair"/>
    <property type="evidence" value="ECO:0007669"/>
    <property type="project" value="UniProtKB-UniRule"/>
</dbReference>
<dbReference type="FunFam" id="1.10.10.10:FF:000133">
    <property type="entry name" value="Regulatory protein RecX"/>
    <property type="match status" value="1"/>
</dbReference>
<dbReference type="FunFam" id="1.10.10.10:FF:000134">
    <property type="entry name" value="Regulatory protein RecX"/>
    <property type="match status" value="1"/>
</dbReference>
<dbReference type="FunFam" id="1.10.10.10:FF:000209">
    <property type="entry name" value="Regulatory protein RecX"/>
    <property type="match status" value="1"/>
</dbReference>
<dbReference type="Gene3D" id="1.10.10.10">
    <property type="entry name" value="Winged helix-like DNA-binding domain superfamily/Winged helix DNA-binding domain"/>
    <property type="match status" value="3"/>
</dbReference>
<dbReference type="HAMAP" id="MF_01114">
    <property type="entry name" value="RecX"/>
    <property type="match status" value="1"/>
</dbReference>
<dbReference type="InterPro" id="IPR053926">
    <property type="entry name" value="RecX_HTH_1st"/>
</dbReference>
<dbReference type="InterPro" id="IPR053924">
    <property type="entry name" value="RecX_HTH_2nd"/>
</dbReference>
<dbReference type="InterPro" id="IPR053925">
    <property type="entry name" value="RecX_HTH_3rd"/>
</dbReference>
<dbReference type="InterPro" id="IPR003783">
    <property type="entry name" value="Regulatory_RecX"/>
</dbReference>
<dbReference type="InterPro" id="IPR036388">
    <property type="entry name" value="WH-like_DNA-bd_sf"/>
</dbReference>
<dbReference type="NCBIfam" id="NF001052">
    <property type="entry name" value="PRK00117.1-1"/>
    <property type="match status" value="1"/>
</dbReference>
<dbReference type="PANTHER" id="PTHR33602">
    <property type="entry name" value="REGULATORY PROTEIN RECX FAMILY PROTEIN"/>
    <property type="match status" value="1"/>
</dbReference>
<dbReference type="PANTHER" id="PTHR33602:SF1">
    <property type="entry name" value="REGULATORY PROTEIN RECX FAMILY PROTEIN"/>
    <property type="match status" value="1"/>
</dbReference>
<dbReference type="Pfam" id="PF21982">
    <property type="entry name" value="RecX_HTH1"/>
    <property type="match status" value="1"/>
</dbReference>
<dbReference type="Pfam" id="PF02631">
    <property type="entry name" value="RecX_HTH2"/>
    <property type="match status" value="1"/>
</dbReference>
<dbReference type="Pfam" id="PF21981">
    <property type="entry name" value="RecX_HTH3"/>
    <property type="match status" value="1"/>
</dbReference>
<name>RECX_ECO81</name>
<reference key="1">
    <citation type="journal article" date="2009" name="PLoS Genet.">
        <title>Organised genome dynamics in the Escherichia coli species results in highly diverse adaptive paths.</title>
        <authorList>
            <person name="Touchon M."/>
            <person name="Hoede C."/>
            <person name="Tenaillon O."/>
            <person name="Barbe V."/>
            <person name="Baeriswyl S."/>
            <person name="Bidet P."/>
            <person name="Bingen E."/>
            <person name="Bonacorsi S."/>
            <person name="Bouchier C."/>
            <person name="Bouvet O."/>
            <person name="Calteau A."/>
            <person name="Chiapello H."/>
            <person name="Clermont O."/>
            <person name="Cruveiller S."/>
            <person name="Danchin A."/>
            <person name="Diard M."/>
            <person name="Dossat C."/>
            <person name="Karoui M.E."/>
            <person name="Frapy E."/>
            <person name="Garry L."/>
            <person name="Ghigo J.M."/>
            <person name="Gilles A.M."/>
            <person name="Johnson J."/>
            <person name="Le Bouguenec C."/>
            <person name="Lescat M."/>
            <person name="Mangenot S."/>
            <person name="Martinez-Jehanne V."/>
            <person name="Matic I."/>
            <person name="Nassif X."/>
            <person name="Oztas S."/>
            <person name="Petit M.A."/>
            <person name="Pichon C."/>
            <person name="Rouy Z."/>
            <person name="Ruf C.S."/>
            <person name="Schneider D."/>
            <person name="Tourret J."/>
            <person name="Vacherie B."/>
            <person name="Vallenet D."/>
            <person name="Medigue C."/>
            <person name="Rocha E.P.C."/>
            <person name="Denamur E."/>
        </authorList>
    </citation>
    <scope>NUCLEOTIDE SEQUENCE [LARGE SCALE GENOMIC DNA]</scope>
    <source>
        <strain>ED1a</strain>
    </source>
</reference>
<protein>
    <recommendedName>
        <fullName evidence="1">Regulatory protein RecX</fullName>
    </recommendedName>
</protein>